<accession>B0RZ50</accession>
<feature type="initiator methionine" description="Removed" evidence="1">
    <location>
        <position position="1"/>
    </location>
</feature>
<feature type="chain" id="PRO_1000094085" description="Formamidopyrimidine-DNA glycosylase">
    <location>
        <begin position="2"/>
        <end position="271"/>
    </location>
</feature>
<feature type="zinc finger region" description="FPG-type" evidence="2">
    <location>
        <begin position="237"/>
        <end position="271"/>
    </location>
</feature>
<feature type="active site" description="Schiff-base intermediate with DNA" evidence="2">
    <location>
        <position position="2"/>
    </location>
</feature>
<feature type="active site" description="Proton donor" evidence="2">
    <location>
        <position position="3"/>
    </location>
</feature>
<feature type="active site" description="Proton donor; for beta-elimination activity" evidence="2">
    <location>
        <position position="58"/>
    </location>
</feature>
<feature type="active site" description="Proton donor; for delta-elimination activity" evidence="2">
    <location>
        <position position="261"/>
    </location>
</feature>
<feature type="binding site" evidence="2">
    <location>
        <position position="92"/>
    </location>
    <ligand>
        <name>DNA</name>
        <dbReference type="ChEBI" id="CHEBI:16991"/>
    </ligand>
</feature>
<feature type="binding site" evidence="2">
    <location>
        <position position="111"/>
    </location>
    <ligand>
        <name>DNA</name>
        <dbReference type="ChEBI" id="CHEBI:16991"/>
    </ligand>
</feature>
<feature type="binding site" evidence="2">
    <location>
        <position position="152"/>
    </location>
    <ligand>
        <name>DNA</name>
        <dbReference type="ChEBI" id="CHEBI:16991"/>
    </ligand>
</feature>
<reference key="1">
    <citation type="journal article" date="2008" name="J. Biotechnol.">
        <title>The genome of Xanthomonas campestris pv. campestris B100 and its use for the reconstruction of metabolic pathways involved in xanthan biosynthesis.</title>
        <authorList>
            <person name="Vorhoelter F.-J."/>
            <person name="Schneiker S."/>
            <person name="Goesmann A."/>
            <person name="Krause L."/>
            <person name="Bekel T."/>
            <person name="Kaiser O."/>
            <person name="Linke B."/>
            <person name="Patschkowski T."/>
            <person name="Rueckert C."/>
            <person name="Schmid J."/>
            <person name="Sidhu V.K."/>
            <person name="Sieber V."/>
            <person name="Tauch A."/>
            <person name="Watt S.A."/>
            <person name="Weisshaar B."/>
            <person name="Becker A."/>
            <person name="Niehaus K."/>
            <person name="Puehler A."/>
        </authorList>
    </citation>
    <scope>NUCLEOTIDE SEQUENCE [LARGE SCALE GENOMIC DNA]</scope>
    <source>
        <strain>B100</strain>
    </source>
</reference>
<keyword id="KW-0227">DNA damage</keyword>
<keyword id="KW-0234">DNA repair</keyword>
<keyword id="KW-0238">DNA-binding</keyword>
<keyword id="KW-0326">Glycosidase</keyword>
<keyword id="KW-0378">Hydrolase</keyword>
<keyword id="KW-0456">Lyase</keyword>
<keyword id="KW-0479">Metal-binding</keyword>
<keyword id="KW-0511">Multifunctional enzyme</keyword>
<keyword id="KW-0862">Zinc</keyword>
<keyword id="KW-0863">Zinc-finger</keyword>
<evidence type="ECO:0000250" key="1"/>
<evidence type="ECO:0000255" key="2">
    <source>
        <dbReference type="HAMAP-Rule" id="MF_00103"/>
    </source>
</evidence>
<sequence>MPELPEVETTLRGLAPHLVGQRIHGVILRRPDLRWPIAEQIEQLLPGATITDVRRRAKYLLIDTDAGGSAVLHLGMSGSLRVLPGDTPPRAHDHVDISLQNGRVLRFNDPRRFGCLLWQRDCETHELLASLGPEPLSPAFTGDYLHALARGRRAAVKTFLMDQAVVVGVGNIYAAESLHRAGISPLREAGKVSRERYRRLADAVKEILAYAIQRGGTTLRDFISPDGAPGYFEQELMVYGREGQACKHCGRELKHATIGQRATVWCAACQR</sequence>
<organism>
    <name type="scientific">Xanthomonas campestris pv. campestris (strain B100)</name>
    <dbReference type="NCBI Taxonomy" id="509169"/>
    <lineage>
        <taxon>Bacteria</taxon>
        <taxon>Pseudomonadati</taxon>
        <taxon>Pseudomonadota</taxon>
        <taxon>Gammaproteobacteria</taxon>
        <taxon>Lysobacterales</taxon>
        <taxon>Lysobacteraceae</taxon>
        <taxon>Xanthomonas</taxon>
    </lineage>
</organism>
<gene>
    <name evidence="2" type="primary">mutM</name>
    <name evidence="2" type="synonym">fpg</name>
    <name type="ordered locus">xcc-b100_4366</name>
</gene>
<protein>
    <recommendedName>
        <fullName evidence="2">Formamidopyrimidine-DNA glycosylase</fullName>
        <shortName evidence="2">Fapy-DNA glycosylase</shortName>
        <ecNumber evidence="2">3.2.2.23</ecNumber>
    </recommendedName>
    <alternativeName>
        <fullName evidence="2">DNA-(apurinic or apyrimidinic site) lyase MutM</fullName>
        <shortName evidence="2">AP lyase MutM</shortName>
        <ecNumber evidence="2">4.2.99.18</ecNumber>
    </alternativeName>
</protein>
<name>FPG_XANCB</name>
<proteinExistence type="inferred from homology"/>
<dbReference type="EC" id="3.2.2.23" evidence="2"/>
<dbReference type="EC" id="4.2.99.18" evidence="2"/>
<dbReference type="EMBL" id="AM920689">
    <property type="protein sequence ID" value="CAP53736.1"/>
    <property type="molecule type" value="Genomic_DNA"/>
</dbReference>
<dbReference type="SMR" id="B0RZ50"/>
<dbReference type="KEGG" id="xca:xcc-b100_4366"/>
<dbReference type="HOGENOM" id="CLU_038423_1_1_6"/>
<dbReference type="Proteomes" id="UP000001188">
    <property type="component" value="Chromosome"/>
</dbReference>
<dbReference type="GO" id="GO:0034039">
    <property type="term" value="F:8-oxo-7,8-dihydroguanine DNA N-glycosylase activity"/>
    <property type="evidence" value="ECO:0007669"/>
    <property type="project" value="TreeGrafter"/>
</dbReference>
<dbReference type="GO" id="GO:0140078">
    <property type="term" value="F:class I DNA-(apurinic or apyrimidinic site) endonuclease activity"/>
    <property type="evidence" value="ECO:0007669"/>
    <property type="project" value="UniProtKB-EC"/>
</dbReference>
<dbReference type="GO" id="GO:0003684">
    <property type="term" value="F:damaged DNA binding"/>
    <property type="evidence" value="ECO:0007669"/>
    <property type="project" value="InterPro"/>
</dbReference>
<dbReference type="GO" id="GO:0008270">
    <property type="term" value="F:zinc ion binding"/>
    <property type="evidence" value="ECO:0007669"/>
    <property type="project" value="UniProtKB-UniRule"/>
</dbReference>
<dbReference type="GO" id="GO:0006284">
    <property type="term" value="P:base-excision repair"/>
    <property type="evidence" value="ECO:0007669"/>
    <property type="project" value="InterPro"/>
</dbReference>
<dbReference type="CDD" id="cd08966">
    <property type="entry name" value="EcFpg-like_N"/>
    <property type="match status" value="1"/>
</dbReference>
<dbReference type="FunFam" id="1.10.8.50:FF:000003">
    <property type="entry name" value="Formamidopyrimidine-DNA glycosylase"/>
    <property type="match status" value="1"/>
</dbReference>
<dbReference type="FunFam" id="3.20.190.10:FF:000001">
    <property type="entry name" value="Formamidopyrimidine-DNA glycosylase"/>
    <property type="match status" value="1"/>
</dbReference>
<dbReference type="Gene3D" id="1.10.8.50">
    <property type="match status" value="1"/>
</dbReference>
<dbReference type="Gene3D" id="3.20.190.10">
    <property type="entry name" value="MutM-like, N-terminal"/>
    <property type="match status" value="1"/>
</dbReference>
<dbReference type="HAMAP" id="MF_00103">
    <property type="entry name" value="Fapy_DNA_glycosyl"/>
    <property type="match status" value="1"/>
</dbReference>
<dbReference type="InterPro" id="IPR015886">
    <property type="entry name" value="DNA_glyclase/AP_lyase_DNA-bd"/>
</dbReference>
<dbReference type="InterPro" id="IPR015887">
    <property type="entry name" value="DNA_glyclase_Znf_dom_DNA_BS"/>
</dbReference>
<dbReference type="InterPro" id="IPR020629">
    <property type="entry name" value="Formamido-pyr_DNA_Glyclase"/>
</dbReference>
<dbReference type="InterPro" id="IPR012319">
    <property type="entry name" value="FPG_cat"/>
</dbReference>
<dbReference type="InterPro" id="IPR035937">
    <property type="entry name" value="MutM-like_N-ter"/>
</dbReference>
<dbReference type="InterPro" id="IPR010979">
    <property type="entry name" value="Ribosomal_uS13-like_H2TH"/>
</dbReference>
<dbReference type="InterPro" id="IPR000214">
    <property type="entry name" value="Znf_DNA_glyclase/AP_lyase"/>
</dbReference>
<dbReference type="InterPro" id="IPR010663">
    <property type="entry name" value="Znf_FPG/IleRS"/>
</dbReference>
<dbReference type="NCBIfam" id="TIGR00577">
    <property type="entry name" value="fpg"/>
    <property type="match status" value="1"/>
</dbReference>
<dbReference type="NCBIfam" id="NF002211">
    <property type="entry name" value="PRK01103.1"/>
    <property type="match status" value="1"/>
</dbReference>
<dbReference type="PANTHER" id="PTHR22993">
    <property type="entry name" value="FORMAMIDOPYRIMIDINE-DNA GLYCOSYLASE"/>
    <property type="match status" value="1"/>
</dbReference>
<dbReference type="PANTHER" id="PTHR22993:SF9">
    <property type="entry name" value="FORMAMIDOPYRIMIDINE-DNA GLYCOSYLASE"/>
    <property type="match status" value="1"/>
</dbReference>
<dbReference type="Pfam" id="PF01149">
    <property type="entry name" value="Fapy_DNA_glyco"/>
    <property type="match status" value="1"/>
</dbReference>
<dbReference type="Pfam" id="PF06831">
    <property type="entry name" value="H2TH"/>
    <property type="match status" value="1"/>
</dbReference>
<dbReference type="Pfam" id="PF06827">
    <property type="entry name" value="zf-FPG_IleRS"/>
    <property type="match status" value="1"/>
</dbReference>
<dbReference type="SMART" id="SM00898">
    <property type="entry name" value="Fapy_DNA_glyco"/>
    <property type="match status" value="1"/>
</dbReference>
<dbReference type="SMART" id="SM01232">
    <property type="entry name" value="H2TH"/>
    <property type="match status" value="1"/>
</dbReference>
<dbReference type="SUPFAM" id="SSF57716">
    <property type="entry name" value="Glucocorticoid receptor-like (DNA-binding domain)"/>
    <property type="match status" value="1"/>
</dbReference>
<dbReference type="SUPFAM" id="SSF81624">
    <property type="entry name" value="N-terminal domain of MutM-like DNA repair proteins"/>
    <property type="match status" value="1"/>
</dbReference>
<dbReference type="SUPFAM" id="SSF46946">
    <property type="entry name" value="S13-like H2TH domain"/>
    <property type="match status" value="1"/>
</dbReference>
<dbReference type="PROSITE" id="PS51068">
    <property type="entry name" value="FPG_CAT"/>
    <property type="match status" value="1"/>
</dbReference>
<dbReference type="PROSITE" id="PS01242">
    <property type="entry name" value="ZF_FPG_1"/>
    <property type="match status" value="1"/>
</dbReference>
<dbReference type="PROSITE" id="PS51066">
    <property type="entry name" value="ZF_FPG_2"/>
    <property type="match status" value="1"/>
</dbReference>
<comment type="function">
    <text evidence="2">Involved in base excision repair of DNA damaged by oxidation or by mutagenic agents. Acts as a DNA glycosylase that recognizes and removes damaged bases. Has a preference for oxidized purines, such as 7,8-dihydro-8-oxoguanine (8-oxoG). Has AP (apurinic/apyrimidinic) lyase activity and introduces nicks in the DNA strand. Cleaves the DNA backbone by beta-delta elimination to generate a single-strand break at the site of the removed base with both 3'- and 5'-phosphates.</text>
</comment>
<comment type="catalytic activity">
    <reaction evidence="2">
        <text>Hydrolysis of DNA containing ring-opened 7-methylguanine residues, releasing 2,6-diamino-4-hydroxy-5-(N-methyl)formamidopyrimidine.</text>
        <dbReference type="EC" id="3.2.2.23"/>
    </reaction>
</comment>
<comment type="catalytic activity">
    <reaction evidence="2">
        <text>2'-deoxyribonucleotide-(2'-deoxyribose 5'-phosphate)-2'-deoxyribonucleotide-DNA = a 3'-end 2'-deoxyribonucleotide-(2,3-dehydro-2,3-deoxyribose 5'-phosphate)-DNA + a 5'-end 5'-phospho-2'-deoxyribonucleoside-DNA + H(+)</text>
        <dbReference type="Rhea" id="RHEA:66592"/>
        <dbReference type="Rhea" id="RHEA-COMP:13180"/>
        <dbReference type="Rhea" id="RHEA-COMP:16897"/>
        <dbReference type="Rhea" id="RHEA-COMP:17067"/>
        <dbReference type="ChEBI" id="CHEBI:15378"/>
        <dbReference type="ChEBI" id="CHEBI:136412"/>
        <dbReference type="ChEBI" id="CHEBI:157695"/>
        <dbReference type="ChEBI" id="CHEBI:167181"/>
        <dbReference type="EC" id="4.2.99.18"/>
    </reaction>
</comment>
<comment type="cofactor">
    <cofactor evidence="2">
        <name>Zn(2+)</name>
        <dbReference type="ChEBI" id="CHEBI:29105"/>
    </cofactor>
    <text evidence="2">Binds 1 zinc ion per subunit.</text>
</comment>
<comment type="subunit">
    <text evidence="2">Monomer.</text>
</comment>
<comment type="similarity">
    <text evidence="2">Belongs to the FPG family.</text>
</comment>